<comment type="similarity">
    <text evidence="1">Belongs to the cyclin family. Cyclin C subfamily.</text>
</comment>
<feature type="chain" id="PRO_0000080425" description="Cyclin-C1-1">
    <location>
        <begin position="1"/>
        <end position="257"/>
    </location>
</feature>
<proteinExistence type="evidence at transcript level"/>
<accession>P93411</accession>
<accession>B7EKR4</accession>
<keyword id="KW-0131">Cell cycle</keyword>
<keyword id="KW-0132">Cell division</keyword>
<keyword id="KW-0195">Cyclin</keyword>
<keyword id="KW-1185">Reference proteome</keyword>
<reference key="1">
    <citation type="online journal article" date="1996" name="Plant Gene Register">
        <title>A cDNA clone encoding a C-type cyclin from rice.</title>
        <authorList>
            <person name="Hashimoto J."/>
            <person name="Tanaka H."/>
            <person name="Yamamoto K."/>
            <person name="Sasaki T."/>
        </authorList>
        <locator>PGR96-084</locator>
    </citation>
    <scope>NUCLEOTIDE SEQUENCE [MRNA]</scope>
    <source>
        <strain>cv. Nipponbare</strain>
        <tissue>Callus</tissue>
    </source>
</reference>
<reference key="2">
    <citation type="journal article" date="2005" name="Nature">
        <title>The map-based sequence of the rice genome.</title>
        <authorList>
            <consortium name="International rice genome sequencing project (IRGSP)"/>
        </authorList>
    </citation>
    <scope>NUCLEOTIDE SEQUENCE [LARGE SCALE GENOMIC DNA]</scope>
    <source>
        <strain>cv. Nipponbare</strain>
    </source>
</reference>
<reference key="3">
    <citation type="journal article" date="2008" name="Nucleic Acids Res.">
        <title>The rice annotation project database (RAP-DB): 2008 update.</title>
        <authorList>
            <consortium name="The rice annotation project (RAP)"/>
        </authorList>
    </citation>
    <scope>GENOME REANNOTATION</scope>
    <source>
        <strain>cv. Nipponbare</strain>
    </source>
</reference>
<reference key="4">
    <citation type="journal article" date="2013" name="Rice">
        <title>Improvement of the Oryza sativa Nipponbare reference genome using next generation sequence and optical map data.</title>
        <authorList>
            <person name="Kawahara Y."/>
            <person name="de la Bastide M."/>
            <person name="Hamilton J.P."/>
            <person name="Kanamori H."/>
            <person name="McCombie W.R."/>
            <person name="Ouyang S."/>
            <person name="Schwartz D.C."/>
            <person name="Tanaka T."/>
            <person name="Wu J."/>
            <person name="Zhou S."/>
            <person name="Childs K.L."/>
            <person name="Davidson R.M."/>
            <person name="Lin H."/>
            <person name="Quesada-Ocampo L."/>
            <person name="Vaillancourt B."/>
            <person name="Sakai H."/>
            <person name="Lee S.S."/>
            <person name="Kim J."/>
            <person name="Numa H."/>
            <person name="Itoh T."/>
            <person name="Buell C.R."/>
            <person name="Matsumoto T."/>
        </authorList>
    </citation>
    <scope>GENOME REANNOTATION</scope>
    <source>
        <strain>cv. Nipponbare</strain>
    </source>
</reference>
<reference key="5">
    <citation type="journal article" date="2003" name="Science">
        <title>Collection, mapping, and annotation of over 28,000 cDNA clones from japonica rice.</title>
        <authorList>
            <consortium name="The rice full-length cDNA consortium"/>
        </authorList>
    </citation>
    <scope>NUCLEOTIDE SEQUENCE [LARGE SCALE MRNA]</scope>
    <source>
        <strain>cv. Nipponbare</strain>
    </source>
</reference>
<reference key="6">
    <citation type="journal article" date="2006" name="Mol. Genet. Genomics">
        <title>Genome-wide analysis of cyclin family in rice (Oryza sativa L.).</title>
        <authorList>
            <person name="La H."/>
            <person name="Li J."/>
            <person name="Ji Z."/>
            <person name="Cheng Y."/>
            <person name="Li X."/>
            <person name="Jiang S."/>
            <person name="Venkatesh P.N."/>
            <person name="Ramachandran S."/>
        </authorList>
    </citation>
    <scope>GENE FAMILY</scope>
    <scope>NOMENCLATURE</scope>
</reference>
<evidence type="ECO:0000305" key="1"/>
<protein>
    <recommendedName>
        <fullName>Cyclin-C1-1</fullName>
        <shortName>CycC1;1</shortName>
    </recommendedName>
</protein>
<organism>
    <name type="scientific">Oryza sativa subsp. japonica</name>
    <name type="common">Rice</name>
    <dbReference type="NCBI Taxonomy" id="39947"/>
    <lineage>
        <taxon>Eukaryota</taxon>
        <taxon>Viridiplantae</taxon>
        <taxon>Streptophyta</taxon>
        <taxon>Embryophyta</taxon>
        <taxon>Tracheophyta</taxon>
        <taxon>Spermatophyta</taxon>
        <taxon>Magnoliopsida</taxon>
        <taxon>Liliopsida</taxon>
        <taxon>Poales</taxon>
        <taxon>Poaceae</taxon>
        <taxon>BOP clade</taxon>
        <taxon>Oryzoideae</taxon>
        <taxon>Oryzeae</taxon>
        <taxon>Oryzinae</taxon>
        <taxon>Oryza</taxon>
        <taxon>Oryza sativa</taxon>
    </lineage>
</organism>
<name>CCC11_ORYSJ</name>
<sequence length="257" mass="30193">MAANFWTSSHCKQLLDQEDVDKVPQADSDRGITLEEFRLVKIHMSFHIWRLAQQVKVRQRVIATAVTYFRRVYTRKSMTEYDPRLVAPTCLYLASKVEESTVQARLLVFYIKKMCASDEKYRFEIKDILEMEMKLLEALDYYLVVYHPYRPLLQLLQDAGITDLTQFAWGIVNDTYKMDLILIHPPYMIALACIYIASVLKDKDITLWFEELRVDMNIVKNISMEILDFYDTYKIDPQRGLPEDKIAPVMNKLPSKA</sequence>
<dbReference type="EMBL" id="D86925">
    <property type="protein sequence ID" value="BAA13181.1"/>
    <property type="molecule type" value="mRNA"/>
</dbReference>
<dbReference type="EMBL" id="AC108763">
    <property type="status" value="NOT_ANNOTATED_CDS"/>
    <property type="molecule type" value="Genomic_DNA"/>
</dbReference>
<dbReference type="EMBL" id="AP008215">
    <property type="protein sequence ID" value="BAH94657.1"/>
    <property type="molecule type" value="Genomic_DNA"/>
</dbReference>
<dbReference type="EMBL" id="AP014965">
    <property type="protein sequence ID" value="BAT08842.1"/>
    <property type="molecule type" value="Genomic_DNA"/>
</dbReference>
<dbReference type="EMBL" id="AK072415">
    <property type="protein sequence ID" value="BAG92961.1"/>
    <property type="molecule type" value="mRNA"/>
</dbReference>
<dbReference type="PIR" id="T03724">
    <property type="entry name" value="T03724"/>
</dbReference>
<dbReference type="RefSeq" id="XP_015611762.1">
    <property type="nucleotide sequence ID" value="XM_015756276.1"/>
</dbReference>
<dbReference type="SMR" id="P93411"/>
<dbReference type="FunCoup" id="P93411">
    <property type="interactions" value="2531"/>
</dbReference>
<dbReference type="STRING" id="39947.P93411"/>
<dbReference type="PaxDb" id="39947-P93411"/>
<dbReference type="EnsemblPlants" id="Os09t0504400-01">
    <property type="protein sequence ID" value="Os09t0504400-01"/>
    <property type="gene ID" value="Os09g0504400"/>
</dbReference>
<dbReference type="Gramene" id="Os09t0504400-01">
    <property type="protein sequence ID" value="Os09t0504400-01"/>
    <property type="gene ID" value="Os09g0504400"/>
</dbReference>
<dbReference type="KEGG" id="dosa:Os09g0504400"/>
<dbReference type="eggNOG" id="KOG0794">
    <property type="taxonomic scope" value="Eukaryota"/>
</dbReference>
<dbReference type="HOGENOM" id="CLU_034754_0_0_1"/>
<dbReference type="InParanoid" id="P93411"/>
<dbReference type="OMA" id="CLLHPPH"/>
<dbReference type="OrthoDB" id="10266018at2759"/>
<dbReference type="Proteomes" id="UP000000763">
    <property type="component" value="Chromosome 9"/>
</dbReference>
<dbReference type="Proteomes" id="UP000059680">
    <property type="component" value="Chromosome 9"/>
</dbReference>
<dbReference type="GO" id="GO:0016592">
    <property type="term" value="C:mediator complex"/>
    <property type="evidence" value="ECO:0000318"/>
    <property type="project" value="GO_Central"/>
</dbReference>
<dbReference type="GO" id="GO:0005634">
    <property type="term" value="C:nucleus"/>
    <property type="evidence" value="ECO:0000318"/>
    <property type="project" value="GO_Central"/>
</dbReference>
<dbReference type="GO" id="GO:0016538">
    <property type="term" value="F:cyclin-dependent protein serine/threonine kinase regulator activity"/>
    <property type="evidence" value="ECO:0000318"/>
    <property type="project" value="GO_Central"/>
</dbReference>
<dbReference type="GO" id="GO:0051301">
    <property type="term" value="P:cell division"/>
    <property type="evidence" value="ECO:0007669"/>
    <property type="project" value="UniProtKB-KW"/>
</dbReference>
<dbReference type="GO" id="GO:0045944">
    <property type="term" value="P:positive regulation of transcription by RNA polymerase II"/>
    <property type="evidence" value="ECO:0000318"/>
    <property type="project" value="GO_Central"/>
</dbReference>
<dbReference type="CDD" id="cd20572">
    <property type="entry name" value="CYCLIN_AtCycC_rpt2"/>
    <property type="match status" value="1"/>
</dbReference>
<dbReference type="FunFam" id="1.10.472.10:FF:000058">
    <property type="entry name" value="cyclin-C1-2-like isoform X1"/>
    <property type="match status" value="1"/>
</dbReference>
<dbReference type="Gene3D" id="1.10.472.10">
    <property type="entry name" value="Cyclin-like"/>
    <property type="match status" value="2"/>
</dbReference>
<dbReference type="InterPro" id="IPR013763">
    <property type="entry name" value="Cyclin-like_dom"/>
</dbReference>
<dbReference type="InterPro" id="IPR036915">
    <property type="entry name" value="Cyclin-like_sf"/>
</dbReference>
<dbReference type="InterPro" id="IPR043198">
    <property type="entry name" value="Cyclin/Ssn8"/>
</dbReference>
<dbReference type="InterPro" id="IPR006671">
    <property type="entry name" value="Cyclin_N"/>
</dbReference>
<dbReference type="PANTHER" id="PTHR10026">
    <property type="entry name" value="CYCLIN"/>
    <property type="match status" value="1"/>
</dbReference>
<dbReference type="Pfam" id="PF00134">
    <property type="entry name" value="Cyclin_N"/>
    <property type="match status" value="1"/>
</dbReference>
<dbReference type="PIRSF" id="PIRSF028758">
    <property type="entry name" value="Cyclin, C/H/G types"/>
    <property type="match status" value="1"/>
</dbReference>
<dbReference type="SMART" id="SM00385">
    <property type="entry name" value="CYCLIN"/>
    <property type="match status" value="2"/>
</dbReference>
<dbReference type="SUPFAM" id="SSF47954">
    <property type="entry name" value="Cyclin-like"/>
    <property type="match status" value="2"/>
</dbReference>
<gene>
    <name type="ordered locus">Os09g0504400</name>
    <name type="ordered locus">LOC_Os09g32680</name>
</gene>